<organism>
    <name type="scientific">Mus musculus</name>
    <name type="common">Mouse</name>
    <dbReference type="NCBI Taxonomy" id="10090"/>
    <lineage>
        <taxon>Eukaryota</taxon>
        <taxon>Metazoa</taxon>
        <taxon>Chordata</taxon>
        <taxon>Craniata</taxon>
        <taxon>Vertebrata</taxon>
        <taxon>Euteleostomi</taxon>
        <taxon>Mammalia</taxon>
        <taxon>Eutheria</taxon>
        <taxon>Euarchontoglires</taxon>
        <taxon>Glires</taxon>
        <taxon>Rodentia</taxon>
        <taxon>Myomorpha</taxon>
        <taxon>Muroidea</taxon>
        <taxon>Muridae</taxon>
        <taxon>Murinae</taxon>
        <taxon>Mus</taxon>
        <taxon>Mus</taxon>
    </lineage>
</organism>
<protein>
    <recommendedName>
        <fullName>Spermatogenesis-associated protein 24</fullName>
    </recommendedName>
    <alternativeName>
        <fullName>TATA-binding protein-like factor-interacting protein</fullName>
        <shortName>TLF-interacting protein</shortName>
    </alternativeName>
    <alternativeName>
        <fullName>TRF2-interacting protein in testis</fullName>
    </alternativeName>
    <alternativeName>
        <fullName>Testis protein T6441 homolog</fullName>
    </alternativeName>
</protein>
<proteinExistence type="evidence at protein level"/>
<dbReference type="EMBL" id="AY730532">
    <property type="protein sequence ID" value="AAV97890.1"/>
    <property type="molecule type" value="mRNA"/>
</dbReference>
<dbReference type="EMBL" id="AK016341">
    <property type="protein sequence ID" value="BAB30197.1"/>
    <property type="molecule type" value="mRNA"/>
</dbReference>
<dbReference type="EMBL" id="BC060950">
    <property type="protein sequence ID" value="AAH60950.1"/>
    <property type="molecule type" value="mRNA"/>
</dbReference>
<dbReference type="CCDS" id="CCDS29146.1">
    <molecule id="Q6P926-1"/>
</dbReference>
<dbReference type="CCDS" id="CCDS29147.1">
    <molecule id="Q6P926-3"/>
</dbReference>
<dbReference type="RefSeq" id="NP_082009.3">
    <molecule id="Q6P926-3"/>
    <property type="nucleotide sequence ID" value="NM_027733.5"/>
</dbReference>
<dbReference type="RefSeq" id="NP_083761.1">
    <molecule id="Q6P926-1"/>
    <property type="nucleotide sequence ID" value="NM_029485.2"/>
</dbReference>
<dbReference type="SMR" id="Q6P926"/>
<dbReference type="BioGRID" id="214576">
    <property type="interactions" value="10"/>
</dbReference>
<dbReference type="FunCoup" id="Q6P926">
    <property type="interactions" value="1819"/>
</dbReference>
<dbReference type="STRING" id="10090.ENSMUSP00000025209"/>
<dbReference type="iPTMnet" id="Q6P926"/>
<dbReference type="PhosphoSitePlus" id="Q6P926"/>
<dbReference type="PaxDb" id="10090-ENSMUSP00000025209"/>
<dbReference type="ProteomicsDB" id="257292">
    <molecule id="Q6P926-1"/>
</dbReference>
<dbReference type="ProteomicsDB" id="257293">
    <molecule id="Q6P926-2"/>
</dbReference>
<dbReference type="ProteomicsDB" id="257294">
    <molecule id="Q6P926-3"/>
</dbReference>
<dbReference type="DNASU" id="71242"/>
<dbReference type="Ensembl" id="ENSMUST00000025209.12">
    <molecule id="Q6P926-1"/>
    <property type="protein sequence ID" value="ENSMUSP00000025209.5"/>
    <property type="gene ID" value="ENSMUSG00000024352.13"/>
</dbReference>
<dbReference type="Ensembl" id="ENSMUST00000096573.4">
    <molecule id="Q6P926-3"/>
    <property type="protein sequence ID" value="ENSMUSP00000094324.3"/>
    <property type="gene ID" value="ENSMUSG00000024352.13"/>
</dbReference>
<dbReference type="GeneID" id="71242"/>
<dbReference type="KEGG" id="mmu:71242"/>
<dbReference type="UCSC" id="uc008emn.1">
    <molecule id="Q6P926-1"/>
    <property type="organism name" value="mouse"/>
</dbReference>
<dbReference type="UCSC" id="uc008emo.2">
    <molecule id="Q6P926-3"/>
    <property type="organism name" value="mouse"/>
</dbReference>
<dbReference type="UCSC" id="uc008emp.2">
    <molecule id="Q6P926-2"/>
    <property type="organism name" value="mouse"/>
</dbReference>
<dbReference type="AGR" id="MGI:1918492"/>
<dbReference type="CTD" id="202051"/>
<dbReference type="MGI" id="MGI:1918492">
    <property type="gene designation" value="Spata24"/>
</dbReference>
<dbReference type="VEuPathDB" id="HostDB:ENSMUSG00000024352"/>
<dbReference type="eggNOG" id="ENOG502S3HF">
    <property type="taxonomic scope" value="Eukaryota"/>
</dbReference>
<dbReference type="GeneTree" id="ENSGT00390000007817"/>
<dbReference type="HOGENOM" id="CLU_115899_0_0_1"/>
<dbReference type="InParanoid" id="Q6P926"/>
<dbReference type="OMA" id="HITKQED"/>
<dbReference type="OrthoDB" id="10047985at2759"/>
<dbReference type="PhylomeDB" id="Q6P926"/>
<dbReference type="TreeFam" id="TF338733"/>
<dbReference type="BioGRID-ORCS" id="71242">
    <property type="hits" value="4 hits in 77 CRISPR screens"/>
</dbReference>
<dbReference type="ChiTaRS" id="Spata24">
    <property type="organism name" value="mouse"/>
</dbReference>
<dbReference type="PRO" id="PR:Q6P926"/>
<dbReference type="Proteomes" id="UP000000589">
    <property type="component" value="Chromosome 18"/>
</dbReference>
<dbReference type="RNAct" id="Q6P926">
    <property type="molecule type" value="protein"/>
</dbReference>
<dbReference type="Bgee" id="ENSMUSG00000024352">
    <property type="expression patterns" value="Expressed in spermatid and 176 other cell types or tissues"/>
</dbReference>
<dbReference type="ExpressionAtlas" id="Q6P926">
    <property type="expression patterns" value="baseline and differential"/>
</dbReference>
<dbReference type="GO" id="GO:0005737">
    <property type="term" value="C:cytoplasm"/>
    <property type="evidence" value="ECO:0000314"/>
    <property type="project" value="MGI"/>
</dbReference>
<dbReference type="GO" id="GO:0005829">
    <property type="term" value="C:cytosol"/>
    <property type="evidence" value="ECO:0007669"/>
    <property type="project" value="Ensembl"/>
</dbReference>
<dbReference type="GO" id="GO:0001673">
    <property type="term" value="C:male germ cell nucleus"/>
    <property type="evidence" value="ECO:0000314"/>
    <property type="project" value="MGI"/>
</dbReference>
<dbReference type="GO" id="GO:0005730">
    <property type="term" value="C:nucleolus"/>
    <property type="evidence" value="ECO:0007669"/>
    <property type="project" value="UniProtKB-SubCell"/>
</dbReference>
<dbReference type="GO" id="GO:0005654">
    <property type="term" value="C:nucleoplasm"/>
    <property type="evidence" value="ECO:0007669"/>
    <property type="project" value="UniProtKB-SubCell"/>
</dbReference>
<dbReference type="GO" id="GO:0003677">
    <property type="term" value="F:DNA binding"/>
    <property type="evidence" value="ECO:0000314"/>
    <property type="project" value="MGI"/>
</dbReference>
<dbReference type="GO" id="GO:0042802">
    <property type="term" value="F:identical protein binding"/>
    <property type="evidence" value="ECO:0000353"/>
    <property type="project" value="MGI"/>
</dbReference>
<dbReference type="GO" id="GO:0030154">
    <property type="term" value="P:cell differentiation"/>
    <property type="evidence" value="ECO:0007669"/>
    <property type="project" value="UniProtKB-KW"/>
</dbReference>
<dbReference type="GO" id="GO:0007283">
    <property type="term" value="P:spermatogenesis"/>
    <property type="evidence" value="ECO:0007669"/>
    <property type="project" value="UniProtKB-KW"/>
</dbReference>
<dbReference type="InterPro" id="IPR029176">
    <property type="entry name" value="SPATA24"/>
</dbReference>
<dbReference type="PANTHER" id="PTHR35155">
    <property type="entry name" value="SPERMATOGENESIS-ASSOCIATED PROTEIN 24"/>
    <property type="match status" value="1"/>
</dbReference>
<dbReference type="PANTHER" id="PTHR35155:SF1">
    <property type="entry name" value="SPERMATOGENESIS-ASSOCIATED PROTEIN 24"/>
    <property type="match status" value="1"/>
</dbReference>
<dbReference type="Pfam" id="PF15175">
    <property type="entry name" value="SPATA24"/>
    <property type="match status" value="1"/>
</dbReference>
<sequence>MATPLGWSQGGSGSVCLAFDQLRDVIESQEELIHQLRNVMVLQDENFVSKEEFHEIEKKLVEEKAAHAKTKALLAKEEEKLQFALGEVEVLSKQLEKEKMAFEKALSSVKSRVLQESSKKDQLITKCNEIESHIIKQEDILNGKENEIKELQQVISQQKQNFRNHISDFRIQKQQETYMAQVLDQKRKKATGMRRARSRQCSREK</sequence>
<name>SPA24_MOUSE</name>
<keyword id="KW-0025">Alternative splicing</keyword>
<keyword id="KW-0175">Coiled coil</keyword>
<keyword id="KW-0963">Cytoplasm</keyword>
<keyword id="KW-0217">Developmental protein</keyword>
<keyword id="KW-0221">Differentiation</keyword>
<keyword id="KW-0238">DNA-binding</keyword>
<keyword id="KW-0539">Nucleus</keyword>
<keyword id="KW-1185">Reference proteome</keyword>
<keyword id="KW-0744">Spermatogenesis</keyword>
<keyword id="KW-0804">Transcription</keyword>
<keyword id="KW-0805">Transcription regulation</keyword>
<reference key="1">
    <citation type="journal article" date="2008" name="Cell Cycle">
        <title>TIPT, a male germ cell-specific partner of TRF2, is chromatin-associated and interacts with HP1.</title>
        <authorList>
            <person name="Brancorsini S."/>
            <person name="Davidson I."/>
            <person name="Sassone-Corsi P."/>
        </authorList>
    </citation>
    <scope>NUCLEOTIDE SEQUENCE [MRNA] (ISOFORM 3)</scope>
    <scope>FUNCTION</scope>
    <scope>SUBUNIT</scope>
    <scope>INTERACTION WITH CBX3; CBX5 AND TBPL1</scope>
    <scope>SUBCELLULAR LOCATION</scope>
    <scope>TISSUE SPECIFICITY</scope>
    <scope>DEVELOPMENTAL STAGE</scope>
    <source>
        <strain>129S2/SvPas</strain>
        <tissue>Testis</tissue>
    </source>
</reference>
<reference key="2">
    <citation type="journal article" date="2005" name="Science">
        <title>The transcriptional landscape of the mammalian genome.</title>
        <authorList>
            <person name="Carninci P."/>
            <person name="Kasukawa T."/>
            <person name="Katayama S."/>
            <person name="Gough J."/>
            <person name="Frith M.C."/>
            <person name="Maeda N."/>
            <person name="Oyama R."/>
            <person name="Ravasi T."/>
            <person name="Lenhard B."/>
            <person name="Wells C."/>
            <person name="Kodzius R."/>
            <person name="Shimokawa K."/>
            <person name="Bajic V.B."/>
            <person name="Brenner S.E."/>
            <person name="Batalov S."/>
            <person name="Forrest A.R."/>
            <person name="Zavolan M."/>
            <person name="Davis M.J."/>
            <person name="Wilming L.G."/>
            <person name="Aidinis V."/>
            <person name="Allen J.E."/>
            <person name="Ambesi-Impiombato A."/>
            <person name="Apweiler R."/>
            <person name="Aturaliya R.N."/>
            <person name="Bailey T.L."/>
            <person name="Bansal M."/>
            <person name="Baxter L."/>
            <person name="Beisel K.W."/>
            <person name="Bersano T."/>
            <person name="Bono H."/>
            <person name="Chalk A.M."/>
            <person name="Chiu K.P."/>
            <person name="Choudhary V."/>
            <person name="Christoffels A."/>
            <person name="Clutterbuck D.R."/>
            <person name="Crowe M.L."/>
            <person name="Dalla E."/>
            <person name="Dalrymple B.P."/>
            <person name="de Bono B."/>
            <person name="Della Gatta G."/>
            <person name="di Bernardo D."/>
            <person name="Down T."/>
            <person name="Engstrom P."/>
            <person name="Fagiolini M."/>
            <person name="Faulkner G."/>
            <person name="Fletcher C.F."/>
            <person name="Fukushima T."/>
            <person name="Furuno M."/>
            <person name="Futaki S."/>
            <person name="Gariboldi M."/>
            <person name="Georgii-Hemming P."/>
            <person name="Gingeras T.R."/>
            <person name="Gojobori T."/>
            <person name="Green R.E."/>
            <person name="Gustincich S."/>
            <person name="Harbers M."/>
            <person name="Hayashi Y."/>
            <person name="Hensch T.K."/>
            <person name="Hirokawa N."/>
            <person name="Hill D."/>
            <person name="Huminiecki L."/>
            <person name="Iacono M."/>
            <person name="Ikeo K."/>
            <person name="Iwama A."/>
            <person name="Ishikawa T."/>
            <person name="Jakt M."/>
            <person name="Kanapin A."/>
            <person name="Katoh M."/>
            <person name="Kawasawa Y."/>
            <person name="Kelso J."/>
            <person name="Kitamura H."/>
            <person name="Kitano H."/>
            <person name="Kollias G."/>
            <person name="Krishnan S.P."/>
            <person name="Kruger A."/>
            <person name="Kummerfeld S.K."/>
            <person name="Kurochkin I.V."/>
            <person name="Lareau L.F."/>
            <person name="Lazarevic D."/>
            <person name="Lipovich L."/>
            <person name="Liu J."/>
            <person name="Liuni S."/>
            <person name="McWilliam S."/>
            <person name="Madan Babu M."/>
            <person name="Madera M."/>
            <person name="Marchionni L."/>
            <person name="Matsuda H."/>
            <person name="Matsuzawa S."/>
            <person name="Miki H."/>
            <person name="Mignone F."/>
            <person name="Miyake S."/>
            <person name="Morris K."/>
            <person name="Mottagui-Tabar S."/>
            <person name="Mulder N."/>
            <person name="Nakano N."/>
            <person name="Nakauchi H."/>
            <person name="Ng P."/>
            <person name="Nilsson R."/>
            <person name="Nishiguchi S."/>
            <person name="Nishikawa S."/>
            <person name="Nori F."/>
            <person name="Ohara O."/>
            <person name="Okazaki Y."/>
            <person name="Orlando V."/>
            <person name="Pang K.C."/>
            <person name="Pavan W.J."/>
            <person name="Pavesi G."/>
            <person name="Pesole G."/>
            <person name="Petrovsky N."/>
            <person name="Piazza S."/>
            <person name="Reed J."/>
            <person name="Reid J.F."/>
            <person name="Ring B.Z."/>
            <person name="Ringwald M."/>
            <person name="Rost B."/>
            <person name="Ruan Y."/>
            <person name="Salzberg S.L."/>
            <person name="Sandelin A."/>
            <person name="Schneider C."/>
            <person name="Schoenbach C."/>
            <person name="Sekiguchi K."/>
            <person name="Semple C.A."/>
            <person name="Seno S."/>
            <person name="Sessa L."/>
            <person name="Sheng Y."/>
            <person name="Shibata Y."/>
            <person name="Shimada H."/>
            <person name="Shimada K."/>
            <person name="Silva D."/>
            <person name="Sinclair B."/>
            <person name="Sperling S."/>
            <person name="Stupka E."/>
            <person name="Sugiura K."/>
            <person name="Sultana R."/>
            <person name="Takenaka Y."/>
            <person name="Taki K."/>
            <person name="Tammoja K."/>
            <person name="Tan S.L."/>
            <person name="Tang S."/>
            <person name="Taylor M.S."/>
            <person name="Tegner J."/>
            <person name="Teichmann S.A."/>
            <person name="Ueda H.R."/>
            <person name="van Nimwegen E."/>
            <person name="Verardo R."/>
            <person name="Wei C.L."/>
            <person name="Yagi K."/>
            <person name="Yamanishi H."/>
            <person name="Zabarovsky E."/>
            <person name="Zhu S."/>
            <person name="Zimmer A."/>
            <person name="Hide W."/>
            <person name="Bult C."/>
            <person name="Grimmond S.M."/>
            <person name="Teasdale R.D."/>
            <person name="Liu E.T."/>
            <person name="Brusic V."/>
            <person name="Quackenbush J."/>
            <person name="Wahlestedt C."/>
            <person name="Mattick J.S."/>
            <person name="Hume D.A."/>
            <person name="Kai C."/>
            <person name="Sasaki D."/>
            <person name="Tomaru Y."/>
            <person name="Fukuda S."/>
            <person name="Kanamori-Katayama M."/>
            <person name="Suzuki M."/>
            <person name="Aoki J."/>
            <person name="Arakawa T."/>
            <person name="Iida J."/>
            <person name="Imamura K."/>
            <person name="Itoh M."/>
            <person name="Kato T."/>
            <person name="Kawaji H."/>
            <person name="Kawagashira N."/>
            <person name="Kawashima T."/>
            <person name="Kojima M."/>
            <person name="Kondo S."/>
            <person name="Konno H."/>
            <person name="Nakano K."/>
            <person name="Ninomiya N."/>
            <person name="Nishio T."/>
            <person name="Okada M."/>
            <person name="Plessy C."/>
            <person name="Shibata K."/>
            <person name="Shiraki T."/>
            <person name="Suzuki S."/>
            <person name="Tagami M."/>
            <person name="Waki K."/>
            <person name="Watahiki A."/>
            <person name="Okamura-Oho Y."/>
            <person name="Suzuki H."/>
            <person name="Kawai J."/>
            <person name="Hayashizaki Y."/>
        </authorList>
    </citation>
    <scope>NUCLEOTIDE SEQUENCE [LARGE SCALE MRNA] (ISOFORM 2)</scope>
    <source>
        <strain>C57BL/6J</strain>
        <tissue>Testis</tissue>
    </source>
</reference>
<reference key="3">
    <citation type="journal article" date="2004" name="Genome Res.">
        <title>The status, quality, and expansion of the NIH full-length cDNA project: the Mammalian Gene Collection (MGC).</title>
        <authorList>
            <consortium name="The MGC Project Team"/>
        </authorList>
    </citation>
    <scope>NUCLEOTIDE SEQUENCE [LARGE SCALE MRNA] (ISOFORM 1)</scope>
    <source>
        <tissue>Testis</tissue>
    </source>
</reference>
<reference key="4">
    <citation type="journal article" date="2009" name="BMC Biochem.">
        <title>TIPT2 and geminin interact with basal transcription factors to synergize in transcriptional regulation.</title>
        <authorList>
            <person name="Pitulescu M.E."/>
            <person name="Teichmann M."/>
            <person name="Luo L."/>
            <person name="Kessel M."/>
        </authorList>
    </citation>
    <scope>FUNCTION</scope>
    <scope>SUBUNIT</scope>
    <scope>INTERACTION WITH GMNN; GTF2B; PHCF1; RNF2; SCHM1 AND TBPL1</scope>
    <scope>SUBCELLULAR LOCATION</scope>
    <scope>DEVELOPMENTAL STAGE</scope>
    <scope>MUTAGENESIS OF 186-LYS--LYS-188</scope>
</reference>
<reference key="5">
    <citation type="journal article" date="2010" name="Cell">
        <title>A tissue-specific atlas of mouse protein phosphorylation and expression.</title>
        <authorList>
            <person name="Huttlin E.L."/>
            <person name="Jedrychowski M.P."/>
            <person name="Elias J.E."/>
            <person name="Goswami T."/>
            <person name="Rad R."/>
            <person name="Beausoleil S.A."/>
            <person name="Villen J."/>
            <person name="Haas W."/>
            <person name="Sowa M.E."/>
            <person name="Gygi S.P."/>
        </authorList>
    </citation>
    <scope>IDENTIFICATION BY MASS SPECTROMETRY [LARGE SCALE ANALYSIS]</scope>
    <source>
        <tissue>Testis</tissue>
    </source>
</reference>
<feature type="chain" id="PRO_0000328981" description="Spermatogenesis-associated protein 24">
    <location>
        <begin position="1"/>
        <end position="205"/>
    </location>
</feature>
<feature type="region of interest" description="Required for interaction with CBX5 and TBPL1" evidence="3">
    <location>
        <begin position="138"/>
        <end position="185"/>
    </location>
</feature>
<feature type="region of interest" description="Disordered" evidence="2">
    <location>
        <begin position="185"/>
        <end position="205"/>
    </location>
</feature>
<feature type="coiled-coil region" evidence="1">
    <location>
        <begin position="17"/>
        <end position="167"/>
    </location>
</feature>
<feature type="compositionally biased region" description="Basic residues" evidence="2">
    <location>
        <begin position="186"/>
        <end position="205"/>
    </location>
</feature>
<feature type="splice variant" id="VSP_032868" description="In isoform 2." evidence="5">
    <original>MATPLGWSQGGSGSVCLAFDQLRDVIESQEELIHQLRNV</original>
    <variation>MCPCPFLSQALLQ</variation>
    <location>
        <begin position="1"/>
        <end position="39"/>
    </location>
</feature>
<feature type="splice variant" id="VSP_032869" description="In isoform 2 and isoform 3." evidence="5 6">
    <original>EIESHIIKQEDILNGKENEIKELQQVISQQKQNFRNHISDFRIQKQQETYMAQVLDQKRKKATGMRRARSRQCSREK</original>
    <variation>GRREARAAPQVNIHGLFTNSPMTVPKAGLYPNFCPRLRIQASPVLRKCLQGPGRSRK</variation>
    <location>
        <begin position="129"/>
        <end position="205"/>
    </location>
</feature>
<feature type="mutagenesis site" description="Abolishes binding to GMNN." evidence="4">
    <original>KRK</original>
    <variation>DRD</variation>
    <location>
        <begin position="186"/>
        <end position="188"/>
    </location>
</feature>
<comment type="function">
    <text evidence="3 4">Binds DNA with high affinity but does not bind to TATA boxes. Synergises with GMNN and TBP in activation of TATA box-containing promoters and with GMNN and TBPL1 in activation of the NF1 TATA-less promoter. May play a role in cytoplasm movement and removal during spermiogenesis.</text>
</comment>
<comment type="subunit">
    <text evidence="3 4">Homodimer. Interacts with CBX3, CBX5, GMNN, GTF2B, TBPL1 and the polycomb proteins PHCF2, RNF2 and SCMH1 but not with CBX1 or PCGF2.</text>
</comment>
<comment type="subcellular location">
    <subcellularLocation>
        <location>Cytoplasm</location>
    </subcellularLocation>
    <subcellularLocation>
        <location>Nucleus</location>
        <location>Nucleolus</location>
    </subcellularLocation>
    <subcellularLocation>
        <location>Nucleus</location>
        <location>Nucleoplasm</location>
    </subcellularLocation>
    <text>Associated with chromatin.</text>
</comment>
<comment type="alternative products">
    <event type="alternative splicing"/>
    <isoform>
        <id>Q6P926-1</id>
        <name>1</name>
        <sequence type="displayed"/>
    </isoform>
    <isoform>
        <id>Q6P926-2</id>
        <name>2</name>
        <sequence type="described" ref="VSP_032868 VSP_032869"/>
    </isoform>
    <isoform>
        <id>Q6P926-3</id>
        <name>3</name>
        <sequence type="described" ref="VSP_032869"/>
    </isoform>
</comment>
<comment type="tissue specificity">
    <text evidence="3">Testis-specific (at protein level).</text>
</comment>
<comment type="developmental stage">
    <text evidence="3 4">In the embryo, abundant at 7.5 dpc and 8.5 dpc with higher levels at 9.5 dpc, 10.5 dpc and 11.5 dpc. Expression is low during the first two weeks after birth, increases during the third week and remains elevated in 4-week-old and adult mice. During spermatogenesis, expressed in spermatocytes mainly from zygotene to meiotic metaphase divisions and increases post-meiotically in round spermatids. Expression decreases in stage IV spermatids.</text>
</comment>
<comment type="similarity">
    <text evidence="7">Belongs to the SPATA24 family.</text>
</comment>
<evidence type="ECO:0000255" key="1"/>
<evidence type="ECO:0000256" key="2">
    <source>
        <dbReference type="SAM" id="MobiDB-lite"/>
    </source>
</evidence>
<evidence type="ECO:0000269" key="3">
    <source>
    </source>
</evidence>
<evidence type="ECO:0000269" key="4">
    <source>
    </source>
</evidence>
<evidence type="ECO:0000303" key="5">
    <source>
    </source>
</evidence>
<evidence type="ECO:0000303" key="6">
    <source>
    </source>
</evidence>
<evidence type="ECO:0000305" key="7"/>
<accession>Q6P926</accession>
<accession>Q5MMR1</accession>
<accession>Q9D4P6</accession>
<gene>
    <name type="primary">Spata24</name>
    <name type="synonym">Tipt</name>
    <name type="synonym">Tipt2</name>
</gene>